<sequence>MSRVCQVTGKKPMVGNNRSHAKNATRRRFLPNLQNHRFWLEEEKRFVQLRVSTKGIRLIDKKGIEVVVAELRARGEKV</sequence>
<accession>Q8E9M3</accession>
<proteinExistence type="inferred from homology"/>
<evidence type="ECO:0000255" key="1">
    <source>
        <dbReference type="HAMAP-Rule" id="MF_00373"/>
    </source>
</evidence>
<evidence type="ECO:0000256" key="2">
    <source>
        <dbReference type="SAM" id="MobiDB-lite"/>
    </source>
</evidence>
<evidence type="ECO:0000305" key="3"/>
<keyword id="KW-1185">Reference proteome</keyword>
<keyword id="KW-0687">Ribonucleoprotein</keyword>
<keyword id="KW-0689">Ribosomal protein</keyword>
<gene>
    <name evidence="1" type="primary">rpmB</name>
    <name type="ordered locus">SO_4247</name>
</gene>
<organism>
    <name type="scientific">Shewanella oneidensis (strain ATCC 700550 / JCM 31522 / CIP 106686 / LMG 19005 / NCIMB 14063 / MR-1)</name>
    <dbReference type="NCBI Taxonomy" id="211586"/>
    <lineage>
        <taxon>Bacteria</taxon>
        <taxon>Pseudomonadati</taxon>
        <taxon>Pseudomonadota</taxon>
        <taxon>Gammaproteobacteria</taxon>
        <taxon>Alteromonadales</taxon>
        <taxon>Shewanellaceae</taxon>
        <taxon>Shewanella</taxon>
    </lineage>
</organism>
<dbReference type="EMBL" id="AE014299">
    <property type="protein sequence ID" value="AAN57218.1"/>
    <property type="molecule type" value="Genomic_DNA"/>
</dbReference>
<dbReference type="RefSeq" id="NP_719774.1">
    <property type="nucleotide sequence ID" value="NC_004347.2"/>
</dbReference>
<dbReference type="RefSeq" id="WP_006079870.1">
    <property type="nucleotide sequence ID" value="NZ_CP053946.1"/>
</dbReference>
<dbReference type="SMR" id="Q8E9M3"/>
<dbReference type="STRING" id="211586.SO_4247"/>
<dbReference type="PaxDb" id="211586-SO_4247"/>
<dbReference type="GeneID" id="94729700"/>
<dbReference type="KEGG" id="son:SO_4247"/>
<dbReference type="PATRIC" id="fig|211586.12.peg.4106"/>
<dbReference type="eggNOG" id="COG0227">
    <property type="taxonomic scope" value="Bacteria"/>
</dbReference>
<dbReference type="HOGENOM" id="CLU_064548_3_1_6"/>
<dbReference type="OrthoDB" id="9805609at2"/>
<dbReference type="PhylomeDB" id="Q8E9M3"/>
<dbReference type="BioCyc" id="SONE211586:G1GMP-3923-MONOMER"/>
<dbReference type="PRO" id="PR:Q8E9M3"/>
<dbReference type="Proteomes" id="UP000008186">
    <property type="component" value="Chromosome"/>
</dbReference>
<dbReference type="GO" id="GO:0022625">
    <property type="term" value="C:cytosolic large ribosomal subunit"/>
    <property type="evidence" value="ECO:0000318"/>
    <property type="project" value="GO_Central"/>
</dbReference>
<dbReference type="GO" id="GO:0003735">
    <property type="term" value="F:structural constituent of ribosome"/>
    <property type="evidence" value="ECO:0000318"/>
    <property type="project" value="GO_Central"/>
</dbReference>
<dbReference type="GO" id="GO:0006412">
    <property type="term" value="P:translation"/>
    <property type="evidence" value="ECO:0007669"/>
    <property type="project" value="UniProtKB-UniRule"/>
</dbReference>
<dbReference type="FunFam" id="2.30.170.40:FF:000001">
    <property type="entry name" value="50S ribosomal protein L28"/>
    <property type="match status" value="1"/>
</dbReference>
<dbReference type="Gene3D" id="2.30.170.40">
    <property type="entry name" value="Ribosomal protein L28/L24"/>
    <property type="match status" value="1"/>
</dbReference>
<dbReference type="HAMAP" id="MF_00373">
    <property type="entry name" value="Ribosomal_bL28"/>
    <property type="match status" value="1"/>
</dbReference>
<dbReference type="InterPro" id="IPR026569">
    <property type="entry name" value="Ribosomal_bL28"/>
</dbReference>
<dbReference type="InterPro" id="IPR034704">
    <property type="entry name" value="Ribosomal_bL28/bL31-like_sf"/>
</dbReference>
<dbReference type="InterPro" id="IPR001383">
    <property type="entry name" value="Ribosomal_bL28_bact-type"/>
</dbReference>
<dbReference type="InterPro" id="IPR037147">
    <property type="entry name" value="Ribosomal_bL28_sf"/>
</dbReference>
<dbReference type="NCBIfam" id="TIGR00009">
    <property type="entry name" value="L28"/>
    <property type="match status" value="1"/>
</dbReference>
<dbReference type="PANTHER" id="PTHR13528">
    <property type="entry name" value="39S RIBOSOMAL PROTEIN L28, MITOCHONDRIAL"/>
    <property type="match status" value="1"/>
</dbReference>
<dbReference type="PANTHER" id="PTHR13528:SF2">
    <property type="entry name" value="LARGE RIBOSOMAL SUBUNIT PROTEIN BL28M"/>
    <property type="match status" value="1"/>
</dbReference>
<dbReference type="Pfam" id="PF00830">
    <property type="entry name" value="Ribosomal_L28"/>
    <property type="match status" value="1"/>
</dbReference>
<dbReference type="SUPFAM" id="SSF143800">
    <property type="entry name" value="L28p-like"/>
    <property type="match status" value="1"/>
</dbReference>
<name>RL28_SHEON</name>
<protein>
    <recommendedName>
        <fullName evidence="1">Large ribosomal subunit protein bL28</fullName>
    </recommendedName>
    <alternativeName>
        <fullName evidence="3">50S ribosomal protein L28</fullName>
    </alternativeName>
</protein>
<comment type="similarity">
    <text evidence="1">Belongs to the bacterial ribosomal protein bL28 family.</text>
</comment>
<feature type="chain" id="PRO_0000178545" description="Large ribosomal subunit protein bL28">
    <location>
        <begin position="1"/>
        <end position="78"/>
    </location>
</feature>
<feature type="region of interest" description="Disordered" evidence="2">
    <location>
        <begin position="1"/>
        <end position="21"/>
    </location>
</feature>
<reference key="1">
    <citation type="journal article" date="2002" name="Nat. Biotechnol.">
        <title>Genome sequence of the dissimilatory metal ion-reducing bacterium Shewanella oneidensis.</title>
        <authorList>
            <person name="Heidelberg J.F."/>
            <person name="Paulsen I.T."/>
            <person name="Nelson K.E."/>
            <person name="Gaidos E.J."/>
            <person name="Nelson W.C."/>
            <person name="Read T.D."/>
            <person name="Eisen J.A."/>
            <person name="Seshadri R."/>
            <person name="Ward N.L."/>
            <person name="Methe B.A."/>
            <person name="Clayton R.A."/>
            <person name="Meyer T."/>
            <person name="Tsapin A."/>
            <person name="Scott J."/>
            <person name="Beanan M.J."/>
            <person name="Brinkac L.M."/>
            <person name="Daugherty S.C."/>
            <person name="DeBoy R.T."/>
            <person name="Dodson R.J."/>
            <person name="Durkin A.S."/>
            <person name="Haft D.H."/>
            <person name="Kolonay J.F."/>
            <person name="Madupu R."/>
            <person name="Peterson J.D."/>
            <person name="Umayam L.A."/>
            <person name="White O."/>
            <person name="Wolf A.M."/>
            <person name="Vamathevan J.J."/>
            <person name="Weidman J.F."/>
            <person name="Impraim M."/>
            <person name="Lee K."/>
            <person name="Berry K.J."/>
            <person name="Lee C."/>
            <person name="Mueller J."/>
            <person name="Khouri H.M."/>
            <person name="Gill J."/>
            <person name="Utterback T.R."/>
            <person name="McDonald L.A."/>
            <person name="Feldblyum T.V."/>
            <person name="Smith H.O."/>
            <person name="Venter J.C."/>
            <person name="Nealson K.H."/>
            <person name="Fraser C.M."/>
        </authorList>
    </citation>
    <scope>NUCLEOTIDE SEQUENCE [LARGE SCALE GENOMIC DNA]</scope>
    <source>
        <strain>ATCC 700550 / JCM 31522 / CIP 106686 / LMG 19005 / NCIMB 14063 / MR-1</strain>
    </source>
</reference>